<sequence length="413" mass="47527">MGIFCSVIKFENLQDLRRLCHWGPIIALGVIAICSTMAMIDSVLWYWPLHTTGGSVNFIMLINWTVMILYNYFNAMFAGPGFVPRGWKPEKSQDSMYLQYCKVCQAYKAPRSHHCRKCNRCVMKMDHHCPWINNCCGHQNHASFTLFLLLAPLGCTHAAFIFVMTMYTQLYNRLSFGWNTVKIDMSAARRDPPPIVPFGLAAFAATLFALGLALGTTIAVGMLFFIQIKIILRNKTSIESWIEEKAKDRIQYYQLDEVFIFPYDMGSKWKNFKQVFTWSGVPEGDGLEWPIREGCDQYSLTIEQLKQKADKRVRSVRYKVIEDYNGACCPLNRGVRTFFTSPCTEEPRIRLQKGEFILATRGLRYWLYGDKILDDSFIEGTSRVRGWFPRNCVEKCPCDGDSDPAPEGEKKNR</sequence>
<feature type="chain" id="PRO_0000212872" description="Palmitoyltransferase ZDHHC6">
    <location>
        <begin position="1"/>
        <end position="413"/>
    </location>
</feature>
<feature type="topological domain" description="Cytoplasmic" evidence="9">
    <location>
        <begin position="1"/>
        <end position="24"/>
    </location>
</feature>
<feature type="transmembrane region" description="Helical" evidence="3">
    <location>
        <begin position="25"/>
        <end position="45"/>
    </location>
</feature>
<feature type="topological domain" description="Lumenal" evidence="9">
    <location>
        <begin position="46"/>
        <end position="57"/>
    </location>
</feature>
<feature type="transmembrane region" description="Helical" evidence="3">
    <location>
        <begin position="58"/>
        <end position="78"/>
    </location>
</feature>
<feature type="topological domain" description="Cytoplasmic" evidence="9">
    <location>
        <begin position="79"/>
        <end position="143"/>
    </location>
</feature>
<feature type="transmembrane region" description="Helical" evidence="3">
    <location>
        <begin position="144"/>
        <end position="164"/>
    </location>
</feature>
<feature type="topological domain" description="Lumenal" evidence="9">
    <location>
        <begin position="165"/>
        <end position="194"/>
    </location>
</feature>
<feature type="transmembrane region" description="Helical" evidence="3">
    <location>
        <begin position="195"/>
        <end position="215"/>
    </location>
</feature>
<feature type="topological domain" description="Cytoplasmic" evidence="9">
    <location>
        <begin position="216"/>
        <end position="413"/>
    </location>
</feature>
<feature type="domain" description="DHHC" evidence="4">
    <location>
        <begin position="99"/>
        <end position="149"/>
    </location>
</feature>
<feature type="domain" description="SH3" evidence="5">
    <location>
        <begin position="313"/>
        <end position="398"/>
    </location>
</feature>
<feature type="short sequence motif" description="Di-lysine motif" evidence="2">
    <location>
        <begin position="410"/>
        <end position="413"/>
    </location>
</feature>
<feature type="active site" description="S-palmitoyl cysteine intermediate" evidence="1">
    <location>
        <position position="129"/>
    </location>
</feature>
<feature type="lipid moiety-binding region" description="S-palmitoyl cysteine" evidence="2">
    <location>
        <position position="328"/>
    </location>
</feature>
<feature type="lipid moiety-binding region" description="S-palmitoyl cysteine" evidence="2">
    <location>
        <position position="329"/>
    </location>
</feature>
<feature type="lipid moiety-binding region" description="S-palmitoyl cysteine" evidence="2">
    <location>
        <position position="343"/>
    </location>
</feature>
<feature type="splice variant" id="VSP_006941" description="In isoform 3." evidence="8">
    <original>GTSRVRGWFPRNCVEKCPCDGDSDPAPEGEKKNR</original>
    <variation>DQDVELSAPSPAPCLPRCCHVSHHDDNGLNL</variation>
    <location>
        <begin position="380"/>
        <end position="413"/>
    </location>
</feature>
<feature type="splice variant" id="VSP_016270" description="In isoform 4." evidence="8">
    <original>TSRVRGWFPRNCVEKCPCDGDSDPAPEGEKKNR</original>
    <variation>VSVEKKKSTIAWNLIAESLALQKKKVSKPKIVFDMEHRGVV</variation>
    <location>
        <begin position="381"/>
        <end position="413"/>
    </location>
</feature>
<feature type="splice variant" id="VSP_006939" description="In isoform 2." evidence="8">
    <original>TSRVRGWFPRNCVEKCPCD</original>
    <variation>SHCVTQPQTCSALALAS</variation>
    <location>
        <begin position="381"/>
        <end position="399"/>
    </location>
</feature>
<feature type="splice variant" id="VSP_006940" description="In isoform 2." evidence="8">
    <location>
        <begin position="400"/>
        <end position="413"/>
    </location>
</feature>
<feature type="sequence conflict" description="In Ref. 1; BAC28968." evidence="9" ref="1">
    <original>W</original>
    <variation>R</variation>
    <location>
        <position position="269"/>
    </location>
</feature>
<protein>
    <recommendedName>
        <fullName evidence="9">Palmitoyltransferase ZDHHC6</fullName>
        <ecNumber evidence="2">2.3.1.225</ecNumber>
    </recommendedName>
    <alternativeName>
        <fullName evidence="9">Stearoyltransferase ZDHHC6</fullName>
        <ecNumber evidence="2">2.3.1.-</ecNumber>
    </alternativeName>
    <alternativeName>
        <fullName evidence="2">Zinc finger DHHC domain-containing protein 6</fullName>
        <shortName evidence="2">DHHC-6</shortName>
    </alternativeName>
</protein>
<reference key="1">
    <citation type="journal article" date="2005" name="Science">
        <title>The transcriptional landscape of the mammalian genome.</title>
        <authorList>
            <person name="Carninci P."/>
            <person name="Kasukawa T."/>
            <person name="Katayama S."/>
            <person name="Gough J."/>
            <person name="Frith M.C."/>
            <person name="Maeda N."/>
            <person name="Oyama R."/>
            <person name="Ravasi T."/>
            <person name="Lenhard B."/>
            <person name="Wells C."/>
            <person name="Kodzius R."/>
            <person name="Shimokawa K."/>
            <person name="Bajic V.B."/>
            <person name="Brenner S.E."/>
            <person name="Batalov S."/>
            <person name="Forrest A.R."/>
            <person name="Zavolan M."/>
            <person name="Davis M.J."/>
            <person name="Wilming L.G."/>
            <person name="Aidinis V."/>
            <person name="Allen J.E."/>
            <person name="Ambesi-Impiombato A."/>
            <person name="Apweiler R."/>
            <person name="Aturaliya R.N."/>
            <person name="Bailey T.L."/>
            <person name="Bansal M."/>
            <person name="Baxter L."/>
            <person name="Beisel K.W."/>
            <person name="Bersano T."/>
            <person name="Bono H."/>
            <person name="Chalk A.M."/>
            <person name="Chiu K.P."/>
            <person name="Choudhary V."/>
            <person name="Christoffels A."/>
            <person name="Clutterbuck D.R."/>
            <person name="Crowe M.L."/>
            <person name="Dalla E."/>
            <person name="Dalrymple B.P."/>
            <person name="de Bono B."/>
            <person name="Della Gatta G."/>
            <person name="di Bernardo D."/>
            <person name="Down T."/>
            <person name="Engstrom P."/>
            <person name="Fagiolini M."/>
            <person name="Faulkner G."/>
            <person name="Fletcher C.F."/>
            <person name="Fukushima T."/>
            <person name="Furuno M."/>
            <person name="Futaki S."/>
            <person name="Gariboldi M."/>
            <person name="Georgii-Hemming P."/>
            <person name="Gingeras T.R."/>
            <person name="Gojobori T."/>
            <person name="Green R.E."/>
            <person name="Gustincich S."/>
            <person name="Harbers M."/>
            <person name="Hayashi Y."/>
            <person name="Hensch T.K."/>
            <person name="Hirokawa N."/>
            <person name="Hill D."/>
            <person name="Huminiecki L."/>
            <person name="Iacono M."/>
            <person name="Ikeo K."/>
            <person name="Iwama A."/>
            <person name="Ishikawa T."/>
            <person name="Jakt M."/>
            <person name="Kanapin A."/>
            <person name="Katoh M."/>
            <person name="Kawasawa Y."/>
            <person name="Kelso J."/>
            <person name="Kitamura H."/>
            <person name="Kitano H."/>
            <person name="Kollias G."/>
            <person name="Krishnan S.P."/>
            <person name="Kruger A."/>
            <person name="Kummerfeld S.K."/>
            <person name="Kurochkin I.V."/>
            <person name="Lareau L.F."/>
            <person name="Lazarevic D."/>
            <person name="Lipovich L."/>
            <person name="Liu J."/>
            <person name="Liuni S."/>
            <person name="McWilliam S."/>
            <person name="Madan Babu M."/>
            <person name="Madera M."/>
            <person name="Marchionni L."/>
            <person name="Matsuda H."/>
            <person name="Matsuzawa S."/>
            <person name="Miki H."/>
            <person name="Mignone F."/>
            <person name="Miyake S."/>
            <person name="Morris K."/>
            <person name="Mottagui-Tabar S."/>
            <person name="Mulder N."/>
            <person name="Nakano N."/>
            <person name="Nakauchi H."/>
            <person name="Ng P."/>
            <person name="Nilsson R."/>
            <person name="Nishiguchi S."/>
            <person name="Nishikawa S."/>
            <person name="Nori F."/>
            <person name="Ohara O."/>
            <person name="Okazaki Y."/>
            <person name="Orlando V."/>
            <person name="Pang K.C."/>
            <person name="Pavan W.J."/>
            <person name="Pavesi G."/>
            <person name="Pesole G."/>
            <person name="Petrovsky N."/>
            <person name="Piazza S."/>
            <person name="Reed J."/>
            <person name="Reid J.F."/>
            <person name="Ring B.Z."/>
            <person name="Ringwald M."/>
            <person name="Rost B."/>
            <person name="Ruan Y."/>
            <person name="Salzberg S.L."/>
            <person name="Sandelin A."/>
            <person name="Schneider C."/>
            <person name="Schoenbach C."/>
            <person name="Sekiguchi K."/>
            <person name="Semple C.A."/>
            <person name="Seno S."/>
            <person name="Sessa L."/>
            <person name="Sheng Y."/>
            <person name="Shibata Y."/>
            <person name="Shimada H."/>
            <person name="Shimada K."/>
            <person name="Silva D."/>
            <person name="Sinclair B."/>
            <person name="Sperling S."/>
            <person name="Stupka E."/>
            <person name="Sugiura K."/>
            <person name="Sultana R."/>
            <person name="Takenaka Y."/>
            <person name="Taki K."/>
            <person name="Tammoja K."/>
            <person name="Tan S.L."/>
            <person name="Tang S."/>
            <person name="Taylor M.S."/>
            <person name="Tegner J."/>
            <person name="Teichmann S.A."/>
            <person name="Ueda H.R."/>
            <person name="van Nimwegen E."/>
            <person name="Verardo R."/>
            <person name="Wei C.L."/>
            <person name="Yagi K."/>
            <person name="Yamanishi H."/>
            <person name="Zabarovsky E."/>
            <person name="Zhu S."/>
            <person name="Zimmer A."/>
            <person name="Hide W."/>
            <person name="Bult C."/>
            <person name="Grimmond S.M."/>
            <person name="Teasdale R.D."/>
            <person name="Liu E.T."/>
            <person name="Brusic V."/>
            <person name="Quackenbush J."/>
            <person name="Wahlestedt C."/>
            <person name="Mattick J.S."/>
            <person name="Hume D.A."/>
            <person name="Kai C."/>
            <person name="Sasaki D."/>
            <person name="Tomaru Y."/>
            <person name="Fukuda S."/>
            <person name="Kanamori-Katayama M."/>
            <person name="Suzuki M."/>
            <person name="Aoki J."/>
            <person name="Arakawa T."/>
            <person name="Iida J."/>
            <person name="Imamura K."/>
            <person name="Itoh M."/>
            <person name="Kato T."/>
            <person name="Kawaji H."/>
            <person name="Kawagashira N."/>
            <person name="Kawashima T."/>
            <person name="Kojima M."/>
            <person name="Kondo S."/>
            <person name="Konno H."/>
            <person name="Nakano K."/>
            <person name="Ninomiya N."/>
            <person name="Nishio T."/>
            <person name="Okada M."/>
            <person name="Plessy C."/>
            <person name="Shibata K."/>
            <person name="Shiraki T."/>
            <person name="Suzuki S."/>
            <person name="Tagami M."/>
            <person name="Waki K."/>
            <person name="Watahiki A."/>
            <person name="Okamura-Oho Y."/>
            <person name="Suzuki H."/>
            <person name="Kawai J."/>
            <person name="Hayashizaki Y."/>
        </authorList>
    </citation>
    <scope>NUCLEOTIDE SEQUENCE [LARGE SCALE MRNA] (ISOFORMS 1; 2; 3 AND 4)</scope>
    <source>
        <strain>C57BL/6J</strain>
        <tissue>Egg</tissue>
        <tissue>Embryo</tissue>
        <tissue>Embryonic stem cell</tissue>
        <tissue>Limb</tissue>
        <tissue>Liver</tissue>
        <tissue>Spleen</tissue>
        <tissue>Thymus</tissue>
    </source>
</reference>
<reference key="2">
    <citation type="journal article" date="2004" name="Genome Res.">
        <title>The status, quality, and expansion of the NIH full-length cDNA project: the Mammalian Gene Collection (MGC).</title>
        <authorList>
            <consortium name="The MGC Project Team"/>
        </authorList>
    </citation>
    <scope>NUCLEOTIDE SEQUENCE [LARGE SCALE MRNA] (ISOFORM 1)</scope>
    <source>
        <strain>FVB/N</strain>
    </source>
</reference>
<reference key="3">
    <citation type="journal article" date="2014" name="Proc. Natl. Acad. Sci. U.S.A.">
        <title>Stable expression and function of the inositol 1,4,5-triphosphate receptor requires palmitoylation by a DHHC6/selenoprotein K complex.</title>
        <authorList>
            <person name="Fredericks G.J."/>
            <person name="Hoffmann F.W."/>
            <person name="Rose A.H."/>
            <person name="Osterheld H.J."/>
            <person name="Hess F.M."/>
            <person name="Mercier F."/>
            <person name="Hoffmann P.R."/>
        </authorList>
    </citation>
    <scope>FUNCTION</scope>
    <scope>INTERACTION WITH SELENOK</scope>
</reference>
<reference key="4">
    <citation type="journal article" date="2017" name="Elife">
        <title>Identification and dynamics of the human ZDHHC16-ZDHHC6 palmitoylation cascade.</title>
        <authorList>
            <person name="Abrami L."/>
            <person name="Dallavilla T."/>
            <person name="Sandoz P.A."/>
            <person name="Demir M."/>
            <person name="Kunz B."/>
            <person name="Savoglidis G."/>
            <person name="Hatzimanikatis V."/>
            <person name="van der Goot F.G."/>
        </authorList>
    </citation>
    <scope>PALMITOYLATION</scope>
</reference>
<gene>
    <name evidence="10" type="primary">Zdhhc6</name>
</gene>
<evidence type="ECO:0000250" key="1">
    <source>
        <dbReference type="UniProtKB" id="Q8IUH5"/>
    </source>
</evidence>
<evidence type="ECO:0000250" key="2">
    <source>
        <dbReference type="UniProtKB" id="Q9H6R6"/>
    </source>
</evidence>
<evidence type="ECO:0000255" key="3"/>
<evidence type="ECO:0000255" key="4">
    <source>
        <dbReference type="PROSITE-ProRule" id="PRU00067"/>
    </source>
</evidence>
<evidence type="ECO:0000255" key="5">
    <source>
        <dbReference type="PROSITE-ProRule" id="PRU00192"/>
    </source>
</evidence>
<evidence type="ECO:0000269" key="6">
    <source>
    </source>
</evidence>
<evidence type="ECO:0000269" key="7">
    <source>
    </source>
</evidence>
<evidence type="ECO:0000303" key="8">
    <source>
    </source>
</evidence>
<evidence type="ECO:0000305" key="9"/>
<evidence type="ECO:0000312" key="10">
    <source>
        <dbReference type="MGI" id="MGI:1914230"/>
    </source>
</evidence>
<accession>Q9CPV7</accession>
<accession>Q3U3I8</accession>
<accession>Q3UT70</accession>
<accession>Q544H1</accession>
<dbReference type="EC" id="2.3.1.225" evidence="2"/>
<dbReference type="EC" id="2.3.1.-" evidence="2"/>
<dbReference type="EMBL" id="AK011373">
    <property type="protein sequence ID" value="BAB27576.1"/>
    <property type="molecule type" value="mRNA"/>
</dbReference>
<dbReference type="EMBL" id="AK010296">
    <property type="protein sequence ID" value="BAB26831.1"/>
    <property type="molecule type" value="mRNA"/>
</dbReference>
<dbReference type="EMBL" id="AK077693">
    <property type="protein sequence ID" value="BAC36960.1"/>
    <property type="molecule type" value="mRNA"/>
</dbReference>
<dbReference type="EMBL" id="AK050388">
    <property type="protein sequence ID" value="BAC34229.1"/>
    <property type="molecule type" value="mRNA"/>
</dbReference>
<dbReference type="EMBL" id="AK035172">
    <property type="protein sequence ID" value="BAC28968.1"/>
    <property type="molecule type" value="mRNA"/>
</dbReference>
<dbReference type="EMBL" id="AK038177">
    <property type="protein sequence ID" value="BAC29944.1"/>
    <property type="molecule type" value="mRNA"/>
</dbReference>
<dbReference type="EMBL" id="AK077838">
    <property type="protein sequence ID" value="BAC37027.1"/>
    <property type="molecule type" value="mRNA"/>
</dbReference>
<dbReference type="EMBL" id="AK139707">
    <property type="protein sequence ID" value="BAE24110.1"/>
    <property type="molecule type" value="mRNA"/>
</dbReference>
<dbReference type="EMBL" id="AK144128">
    <property type="protein sequence ID" value="BAE25717.1"/>
    <property type="molecule type" value="mRNA"/>
</dbReference>
<dbReference type="EMBL" id="AK154741">
    <property type="protein sequence ID" value="BAE32798.1"/>
    <property type="molecule type" value="mRNA"/>
</dbReference>
<dbReference type="EMBL" id="AK157494">
    <property type="protein sequence ID" value="BAE34103.1"/>
    <property type="molecule type" value="mRNA"/>
</dbReference>
<dbReference type="EMBL" id="AK159304">
    <property type="protein sequence ID" value="BAE34974.1"/>
    <property type="molecule type" value="mRNA"/>
</dbReference>
<dbReference type="EMBL" id="BC033317">
    <property type="protein sequence ID" value="AAH33317.1"/>
    <property type="molecule type" value="mRNA"/>
</dbReference>
<dbReference type="CCDS" id="CCDS29909.1">
    <molecule id="Q9CPV7-1"/>
</dbReference>
<dbReference type="RefSeq" id="NP_001028745.1">
    <molecule id="Q9CPV7-1"/>
    <property type="nucleotide sequence ID" value="NM_001033573.2"/>
</dbReference>
<dbReference type="RefSeq" id="NP_080159.3">
    <molecule id="Q9CPV7-1"/>
    <property type="nucleotide sequence ID" value="NM_025883.3"/>
</dbReference>
<dbReference type="RefSeq" id="XP_006527331.1">
    <molecule id="Q9CPV7-1"/>
    <property type="nucleotide sequence ID" value="XM_006527268.4"/>
</dbReference>
<dbReference type="RefSeq" id="XP_011245618.1">
    <molecule id="Q9CPV7-1"/>
    <property type="nucleotide sequence ID" value="XM_011247316.3"/>
</dbReference>
<dbReference type="SMR" id="Q9CPV7"/>
<dbReference type="BioGRID" id="211853">
    <property type="interactions" value="9"/>
</dbReference>
<dbReference type="FunCoup" id="Q9CPV7">
    <property type="interactions" value="2934"/>
</dbReference>
<dbReference type="IntAct" id="Q9CPV7">
    <property type="interactions" value="8"/>
</dbReference>
<dbReference type="STRING" id="10090.ENSMUSP00000076157"/>
<dbReference type="iPTMnet" id="Q9CPV7"/>
<dbReference type="PhosphoSitePlus" id="Q9CPV7"/>
<dbReference type="SwissPalm" id="Q9CPV7"/>
<dbReference type="PaxDb" id="10090-ENSMUSP00000076157"/>
<dbReference type="PeptideAtlas" id="Q9CPV7"/>
<dbReference type="ProteomicsDB" id="275343">
    <molecule id="Q9CPV7-1"/>
</dbReference>
<dbReference type="ProteomicsDB" id="275344">
    <molecule id="Q9CPV7-2"/>
</dbReference>
<dbReference type="ProteomicsDB" id="275345">
    <molecule id="Q9CPV7-3"/>
</dbReference>
<dbReference type="ProteomicsDB" id="275346">
    <molecule id="Q9CPV7-4"/>
</dbReference>
<dbReference type="Pumba" id="Q9CPV7"/>
<dbReference type="Antibodypedia" id="18429">
    <property type="antibodies" value="90 antibodies from 17 providers"/>
</dbReference>
<dbReference type="DNASU" id="66980"/>
<dbReference type="Ensembl" id="ENSMUST00000076891.7">
    <molecule id="Q9CPV7-1"/>
    <property type="protein sequence ID" value="ENSMUSP00000076157.6"/>
    <property type="gene ID" value="ENSMUSG00000024982.11"/>
</dbReference>
<dbReference type="Ensembl" id="ENSMUST00000224291.2">
    <molecule id="Q9CPV7-4"/>
    <property type="protein sequence ID" value="ENSMUSP00000153221.2"/>
    <property type="gene ID" value="ENSMUSG00000024982.11"/>
</dbReference>
<dbReference type="Ensembl" id="ENSMUST00000224897.2">
    <molecule id="Q9CPV7-1"/>
    <property type="protein sequence ID" value="ENSMUSP00000153014.2"/>
    <property type="gene ID" value="ENSMUSG00000024982.11"/>
</dbReference>
<dbReference type="Ensembl" id="ENSMUST00000225495.2">
    <molecule id="Q9CPV7-2"/>
    <property type="protein sequence ID" value="ENSMUSP00000152962.2"/>
    <property type="gene ID" value="ENSMUSG00000024982.11"/>
</dbReference>
<dbReference type="Ensembl" id="ENSMUST00000225963.2">
    <molecule id="Q9CPV7-3"/>
    <property type="protein sequence ID" value="ENSMUSP00000153159.2"/>
    <property type="gene ID" value="ENSMUSG00000024982.11"/>
</dbReference>
<dbReference type="Ensembl" id="ENSMUST00000226103.2">
    <molecule id="Q9CPV7-1"/>
    <property type="protein sequence ID" value="ENSMUSP00000153404.2"/>
    <property type="gene ID" value="ENSMUSG00000024982.11"/>
</dbReference>
<dbReference type="GeneID" id="66980"/>
<dbReference type="KEGG" id="mmu:66980"/>
<dbReference type="UCSC" id="uc008hxs.2">
    <molecule id="Q9CPV7-1"/>
    <property type="organism name" value="mouse"/>
</dbReference>
<dbReference type="AGR" id="MGI:1914230"/>
<dbReference type="CTD" id="64429"/>
<dbReference type="MGI" id="MGI:1914230">
    <property type="gene designation" value="Zdhhc6"/>
</dbReference>
<dbReference type="VEuPathDB" id="HostDB:ENSMUSG00000024982"/>
<dbReference type="eggNOG" id="KOG1314">
    <property type="taxonomic scope" value="Eukaryota"/>
</dbReference>
<dbReference type="GeneTree" id="ENSGT00940000155642"/>
<dbReference type="HOGENOM" id="CLU_044394_1_0_1"/>
<dbReference type="InParanoid" id="Q9CPV7"/>
<dbReference type="OMA" id="GCIHAAI"/>
<dbReference type="OrthoDB" id="8734at9989"/>
<dbReference type="PhylomeDB" id="Q9CPV7"/>
<dbReference type="TreeFam" id="TF320809"/>
<dbReference type="BioGRID-ORCS" id="66980">
    <property type="hits" value="0 hits in 79 CRISPR screens"/>
</dbReference>
<dbReference type="ChiTaRS" id="Zdhhc6">
    <property type="organism name" value="mouse"/>
</dbReference>
<dbReference type="PRO" id="PR:Q9CPV7"/>
<dbReference type="Proteomes" id="UP000000589">
    <property type="component" value="Chromosome 19"/>
</dbReference>
<dbReference type="RNAct" id="Q9CPV7">
    <property type="molecule type" value="protein"/>
</dbReference>
<dbReference type="Bgee" id="ENSMUSG00000024982">
    <property type="expression patterns" value="Expressed in right kidney and 251 other cell types or tissues"/>
</dbReference>
<dbReference type="ExpressionAtlas" id="Q9CPV7">
    <property type="expression patterns" value="baseline and differential"/>
</dbReference>
<dbReference type="GO" id="GO:0005783">
    <property type="term" value="C:endoplasmic reticulum"/>
    <property type="evidence" value="ECO:0000250"/>
    <property type="project" value="UniProtKB"/>
</dbReference>
<dbReference type="GO" id="GO:0005789">
    <property type="term" value="C:endoplasmic reticulum membrane"/>
    <property type="evidence" value="ECO:0007669"/>
    <property type="project" value="UniProtKB-SubCell"/>
</dbReference>
<dbReference type="GO" id="GO:0016409">
    <property type="term" value="F:palmitoyltransferase activity"/>
    <property type="evidence" value="ECO:0000250"/>
    <property type="project" value="UniProtKB"/>
</dbReference>
<dbReference type="GO" id="GO:0019706">
    <property type="term" value="F:protein-cysteine S-palmitoyltransferase activity"/>
    <property type="evidence" value="ECO:0007669"/>
    <property type="project" value="UniProtKB-EC"/>
</dbReference>
<dbReference type="GO" id="GO:0140439">
    <property type="term" value="F:protein-cysteine S-stearoyltransferase activity"/>
    <property type="evidence" value="ECO:0000250"/>
    <property type="project" value="UniProtKB"/>
</dbReference>
<dbReference type="GO" id="GO:0010636">
    <property type="term" value="P:positive regulation of mitochondrial fusion"/>
    <property type="evidence" value="ECO:0007669"/>
    <property type="project" value="Ensembl"/>
</dbReference>
<dbReference type="GO" id="GO:0018345">
    <property type="term" value="P:protein palmitoylation"/>
    <property type="evidence" value="ECO:0000314"/>
    <property type="project" value="UniProtKB"/>
</dbReference>
<dbReference type="GO" id="GO:0140438">
    <property type="term" value="P:protein stearoylation"/>
    <property type="evidence" value="ECO:0000250"/>
    <property type="project" value="UniProtKB"/>
</dbReference>
<dbReference type="InterPro" id="IPR001594">
    <property type="entry name" value="Palmitoyltrfase_DHHC"/>
</dbReference>
<dbReference type="InterPro" id="IPR039859">
    <property type="entry name" value="PFA4/ZDH16/20/ERF2-like"/>
</dbReference>
<dbReference type="InterPro" id="IPR036028">
    <property type="entry name" value="SH3-like_dom_sf"/>
</dbReference>
<dbReference type="InterPro" id="IPR001452">
    <property type="entry name" value="SH3_domain"/>
</dbReference>
<dbReference type="PANTHER" id="PTHR12246">
    <property type="entry name" value="PALMITOYLTRANSFERASE ZDHHC16"/>
    <property type="match status" value="1"/>
</dbReference>
<dbReference type="Pfam" id="PF01529">
    <property type="entry name" value="DHHC"/>
    <property type="match status" value="1"/>
</dbReference>
<dbReference type="Pfam" id="PF07653">
    <property type="entry name" value="SH3_2"/>
    <property type="match status" value="1"/>
</dbReference>
<dbReference type="SUPFAM" id="SSF50044">
    <property type="entry name" value="SH3-domain"/>
    <property type="match status" value="1"/>
</dbReference>
<dbReference type="PROSITE" id="PS50216">
    <property type="entry name" value="DHHC"/>
    <property type="match status" value="1"/>
</dbReference>
<dbReference type="PROSITE" id="PS50002">
    <property type="entry name" value="SH3"/>
    <property type="match status" value="1"/>
</dbReference>
<proteinExistence type="evidence at protein level"/>
<comment type="function">
    <text evidence="2 6">Endoplasmic reticulum palmitoyl acyltransferase that mediates palmitoylation of proteins such as AMFR, CALX, ITPR1 and TFRC (PubMed:25368151). Palmitoylates calnexin (CALX), which is required for its association with the ribosome-translocon complex and efficient folding of glycosylated proteins (By similarity). Mediates palmitoylation of AMFR, promoting AMFR distribution to the peripheral endoplasmic reticulum (By similarity). Together with SELENOK, palmitoylates ITPR1 in immune cells, leading to regulate ITPR1 stability and function (PubMed:25368151). Stearoyltransferase that mediates stearoylation of TFRC to inhibit TFRC-mediated activation of the JNK pathway and mitochondrial fragmentation (By similarity).</text>
</comment>
<comment type="catalytic activity">
    <reaction evidence="2">
        <text>L-cysteinyl-[protein] + hexadecanoyl-CoA = S-hexadecanoyl-L-cysteinyl-[protein] + CoA</text>
        <dbReference type="Rhea" id="RHEA:36683"/>
        <dbReference type="Rhea" id="RHEA-COMP:10131"/>
        <dbReference type="Rhea" id="RHEA-COMP:11032"/>
        <dbReference type="ChEBI" id="CHEBI:29950"/>
        <dbReference type="ChEBI" id="CHEBI:57287"/>
        <dbReference type="ChEBI" id="CHEBI:57379"/>
        <dbReference type="ChEBI" id="CHEBI:74151"/>
        <dbReference type="EC" id="2.3.1.225"/>
    </reaction>
    <physiologicalReaction direction="left-to-right" evidence="2">
        <dbReference type="Rhea" id="RHEA:36684"/>
    </physiologicalReaction>
</comment>
<comment type="catalytic activity">
    <reaction evidence="2">
        <text>L-cysteinyl-[protein] + octadecanoyl-CoA = S-octadecanoyl-L-cysteinyl-[protein] + CoA</text>
        <dbReference type="Rhea" id="RHEA:59740"/>
        <dbReference type="Rhea" id="RHEA-COMP:10131"/>
        <dbReference type="Rhea" id="RHEA-COMP:15434"/>
        <dbReference type="ChEBI" id="CHEBI:29950"/>
        <dbReference type="ChEBI" id="CHEBI:57287"/>
        <dbReference type="ChEBI" id="CHEBI:57394"/>
        <dbReference type="ChEBI" id="CHEBI:143200"/>
    </reaction>
    <physiologicalReaction direction="left-to-right" evidence="2">
        <dbReference type="Rhea" id="RHEA:59741"/>
    </physiologicalReaction>
</comment>
<comment type="subunit">
    <text evidence="2 6">Homooligomerizes (By similarity). Interacts with SELENOK (PubMed:25368151).</text>
</comment>
<comment type="subcellular location">
    <subcellularLocation>
        <location evidence="2">Endoplasmic reticulum membrane</location>
        <topology evidence="3">Multi-pass membrane protein</topology>
    </subcellularLocation>
    <text evidence="2">When not palmitoylated, accumulates to dot-like structures in the endoplasmic reticulum.</text>
</comment>
<comment type="alternative products">
    <event type="alternative splicing"/>
    <isoform>
        <id>Q9CPV7-1</id>
        <name>1</name>
        <sequence type="displayed"/>
    </isoform>
    <isoform>
        <id>Q9CPV7-2</id>
        <name>2</name>
        <sequence type="described" ref="VSP_006939 VSP_006940"/>
    </isoform>
    <isoform>
        <id>Q9CPV7-3</id>
        <name>3</name>
        <sequence type="described" ref="VSP_006941"/>
    </isoform>
    <isoform>
        <id>Q9CPV7-4</id>
        <name>4</name>
        <sequence type="described" ref="VSP_016270"/>
    </isoform>
    <text>Experimental confirmation may be lacking for some isoforms.</text>
</comment>
<comment type="domain">
    <text evidence="1">The DHHC domain is required for palmitoyltransferase activity.</text>
</comment>
<comment type="domain">
    <text evidence="2">The C-terminal di-lysine motif confers endoplasmic reticulum localization.</text>
</comment>
<comment type="PTM">
    <text evidence="2 7">Palmitoylated at 3 different sites by ZDHHC16. The combination of the different palmitoylation events strongly affects the quaternary assembly of ZDHHC6, its localization, stability and function. Palmitoylation at Cys-328 accelerates the turnover of ZDHHC6. Depalmitoylated by LYPLA2.</text>
</comment>
<comment type="similarity">
    <text evidence="9">Belongs to the DHHC palmitoyltransferase family.</text>
</comment>
<organism>
    <name type="scientific">Mus musculus</name>
    <name type="common">Mouse</name>
    <dbReference type="NCBI Taxonomy" id="10090"/>
    <lineage>
        <taxon>Eukaryota</taxon>
        <taxon>Metazoa</taxon>
        <taxon>Chordata</taxon>
        <taxon>Craniata</taxon>
        <taxon>Vertebrata</taxon>
        <taxon>Euteleostomi</taxon>
        <taxon>Mammalia</taxon>
        <taxon>Eutheria</taxon>
        <taxon>Euarchontoglires</taxon>
        <taxon>Glires</taxon>
        <taxon>Rodentia</taxon>
        <taxon>Myomorpha</taxon>
        <taxon>Muroidea</taxon>
        <taxon>Muridae</taxon>
        <taxon>Murinae</taxon>
        <taxon>Mus</taxon>
        <taxon>Mus</taxon>
    </lineage>
</organism>
<keyword id="KW-0012">Acyltransferase</keyword>
<keyword id="KW-0025">Alternative splicing</keyword>
<keyword id="KW-0256">Endoplasmic reticulum</keyword>
<keyword id="KW-0449">Lipoprotein</keyword>
<keyword id="KW-0472">Membrane</keyword>
<keyword id="KW-0564">Palmitate</keyword>
<keyword id="KW-1185">Reference proteome</keyword>
<keyword id="KW-0728">SH3 domain</keyword>
<keyword id="KW-0808">Transferase</keyword>
<keyword id="KW-0812">Transmembrane</keyword>
<keyword id="KW-1133">Transmembrane helix</keyword>
<name>ZDHC6_MOUSE</name>